<reference key="1">
    <citation type="journal article" date="2004" name="Nature">
        <title>Genome sequence of the Brown Norway rat yields insights into mammalian evolution.</title>
        <authorList>
            <person name="Gibbs R.A."/>
            <person name="Weinstock G.M."/>
            <person name="Metzker M.L."/>
            <person name="Muzny D.M."/>
            <person name="Sodergren E.J."/>
            <person name="Scherer S."/>
            <person name="Scott G."/>
            <person name="Steffen D."/>
            <person name="Worley K.C."/>
            <person name="Burch P.E."/>
            <person name="Okwuonu G."/>
            <person name="Hines S."/>
            <person name="Lewis L."/>
            <person name="Deramo C."/>
            <person name="Delgado O."/>
            <person name="Dugan-Rocha S."/>
            <person name="Miner G."/>
            <person name="Morgan M."/>
            <person name="Hawes A."/>
            <person name="Gill R."/>
            <person name="Holt R.A."/>
            <person name="Adams M.D."/>
            <person name="Amanatides P.G."/>
            <person name="Baden-Tillson H."/>
            <person name="Barnstead M."/>
            <person name="Chin S."/>
            <person name="Evans C.A."/>
            <person name="Ferriera S."/>
            <person name="Fosler C."/>
            <person name="Glodek A."/>
            <person name="Gu Z."/>
            <person name="Jennings D."/>
            <person name="Kraft C.L."/>
            <person name="Nguyen T."/>
            <person name="Pfannkoch C.M."/>
            <person name="Sitter C."/>
            <person name="Sutton G.G."/>
            <person name="Venter J.C."/>
            <person name="Woodage T."/>
            <person name="Smith D."/>
            <person name="Lee H.-M."/>
            <person name="Gustafson E."/>
            <person name="Cahill P."/>
            <person name="Kana A."/>
            <person name="Doucette-Stamm L."/>
            <person name="Weinstock K."/>
            <person name="Fechtel K."/>
            <person name="Weiss R.B."/>
            <person name="Dunn D.M."/>
            <person name="Green E.D."/>
            <person name="Blakesley R.W."/>
            <person name="Bouffard G.G."/>
            <person name="De Jong P.J."/>
            <person name="Osoegawa K."/>
            <person name="Zhu B."/>
            <person name="Marra M."/>
            <person name="Schein J."/>
            <person name="Bosdet I."/>
            <person name="Fjell C."/>
            <person name="Jones S."/>
            <person name="Krzywinski M."/>
            <person name="Mathewson C."/>
            <person name="Siddiqui A."/>
            <person name="Wye N."/>
            <person name="McPherson J."/>
            <person name="Zhao S."/>
            <person name="Fraser C.M."/>
            <person name="Shetty J."/>
            <person name="Shatsman S."/>
            <person name="Geer K."/>
            <person name="Chen Y."/>
            <person name="Abramzon S."/>
            <person name="Nierman W.C."/>
            <person name="Havlak P.H."/>
            <person name="Chen R."/>
            <person name="Durbin K.J."/>
            <person name="Egan A."/>
            <person name="Ren Y."/>
            <person name="Song X.-Z."/>
            <person name="Li B."/>
            <person name="Liu Y."/>
            <person name="Qin X."/>
            <person name="Cawley S."/>
            <person name="Cooney A.J."/>
            <person name="D'Souza L.M."/>
            <person name="Martin K."/>
            <person name="Wu J.Q."/>
            <person name="Gonzalez-Garay M.L."/>
            <person name="Jackson A.R."/>
            <person name="Kalafus K.J."/>
            <person name="McLeod M.P."/>
            <person name="Milosavljevic A."/>
            <person name="Virk D."/>
            <person name="Volkov A."/>
            <person name="Wheeler D.A."/>
            <person name="Zhang Z."/>
            <person name="Bailey J.A."/>
            <person name="Eichler E.E."/>
            <person name="Tuzun E."/>
            <person name="Birney E."/>
            <person name="Mongin E."/>
            <person name="Ureta-Vidal A."/>
            <person name="Woodwark C."/>
            <person name="Zdobnov E."/>
            <person name="Bork P."/>
            <person name="Suyama M."/>
            <person name="Torrents D."/>
            <person name="Alexandersson M."/>
            <person name="Trask B.J."/>
            <person name="Young J.M."/>
            <person name="Huang H."/>
            <person name="Wang H."/>
            <person name="Xing H."/>
            <person name="Daniels S."/>
            <person name="Gietzen D."/>
            <person name="Schmidt J."/>
            <person name="Stevens K."/>
            <person name="Vitt U."/>
            <person name="Wingrove J."/>
            <person name="Camara F."/>
            <person name="Mar Alba M."/>
            <person name="Abril J.F."/>
            <person name="Guigo R."/>
            <person name="Smit A."/>
            <person name="Dubchak I."/>
            <person name="Rubin E.M."/>
            <person name="Couronne O."/>
            <person name="Poliakov A."/>
            <person name="Huebner N."/>
            <person name="Ganten D."/>
            <person name="Goesele C."/>
            <person name="Hummel O."/>
            <person name="Kreitler T."/>
            <person name="Lee Y.-A."/>
            <person name="Monti J."/>
            <person name="Schulz H."/>
            <person name="Zimdahl H."/>
            <person name="Himmelbauer H."/>
            <person name="Lehrach H."/>
            <person name="Jacob H.J."/>
            <person name="Bromberg S."/>
            <person name="Gullings-Handley J."/>
            <person name="Jensen-Seaman M.I."/>
            <person name="Kwitek A.E."/>
            <person name="Lazar J."/>
            <person name="Pasko D."/>
            <person name="Tonellato P.J."/>
            <person name="Twigger S."/>
            <person name="Ponting C.P."/>
            <person name="Duarte J.M."/>
            <person name="Rice S."/>
            <person name="Goodstadt L."/>
            <person name="Beatson S.A."/>
            <person name="Emes R.D."/>
            <person name="Winter E.E."/>
            <person name="Webber C."/>
            <person name="Brandt P."/>
            <person name="Nyakatura G."/>
            <person name="Adetobi M."/>
            <person name="Chiaromonte F."/>
            <person name="Elnitski L."/>
            <person name="Eswara P."/>
            <person name="Hardison R.C."/>
            <person name="Hou M."/>
            <person name="Kolbe D."/>
            <person name="Makova K."/>
            <person name="Miller W."/>
            <person name="Nekrutenko A."/>
            <person name="Riemer C."/>
            <person name="Schwartz S."/>
            <person name="Taylor J."/>
            <person name="Yang S."/>
            <person name="Zhang Y."/>
            <person name="Lindpaintner K."/>
            <person name="Andrews T.D."/>
            <person name="Caccamo M."/>
            <person name="Clamp M."/>
            <person name="Clarke L."/>
            <person name="Curwen V."/>
            <person name="Durbin R.M."/>
            <person name="Eyras E."/>
            <person name="Searle S.M."/>
            <person name="Cooper G.M."/>
            <person name="Batzoglou S."/>
            <person name="Brudno M."/>
            <person name="Sidow A."/>
            <person name="Stone E.A."/>
            <person name="Payseur B.A."/>
            <person name="Bourque G."/>
            <person name="Lopez-Otin C."/>
            <person name="Puente X.S."/>
            <person name="Chakrabarti K."/>
            <person name="Chatterji S."/>
            <person name="Dewey C."/>
            <person name="Pachter L."/>
            <person name="Bray N."/>
            <person name="Yap V.B."/>
            <person name="Caspi A."/>
            <person name="Tesler G."/>
            <person name="Pevzner P.A."/>
            <person name="Haussler D."/>
            <person name="Roskin K.M."/>
            <person name="Baertsch R."/>
            <person name="Clawson H."/>
            <person name="Furey T.S."/>
            <person name="Hinrichs A.S."/>
            <person name="Karolchik D."/>
            <person name="Kent W.J."/>
            <person name="Rosenbloom K.R."/>
            <person name="Trumbower H."/>
            <person name="Weirauch M."/>
            <person name="Cooper D.N."/>
            <person name="Stenson P.D."/>
            <person name="Ma B."/>
            <person name="Brent M."/>
            <person name="Arumugam M."/>
            <person name="Shteynberg D."/>
            <person name="Copley R.R."/>
            <person name="Taylor M.S."/>
            <person name="Riethman H."/>
            <person name="Mudunuri U."/>
            <person name="Peterson J."/>
            <person name="Guyer M."/>
            <person name="Felsenfeld A."/>
            <person name="Old S."/>
            <person name="Mockrin S."/>
            <person name="Collins F.S."/>
        </authorList>
    </citation>
    <scope>NUCLEOTIDE SEQUENCE [LARGE SCALE GENOMIC DNA]</scope>
    <source>
        <strain>Brown Norway</strain>
    </source>
</reference>
<reference key="2">
    <citation type="journal article" date="2011" name="Mol. Cell">
        <title>SH3BP1, an exocyst-associated RhoGAP, inactivates Rac1 at the front to drive cell motility.</title>
        <authorList>
            <person name="Parrini M.C."/>
            <person name="Sadou-Dubourgnoux A."/>
            <person name="Aoki K."/>
            <person name="Kunida K."/>
            <person name="Biondini M."/>
            <person name="Hatzoglou A."/>
            <person name="Poullet P."/>
            <person name="Formstecher E."/>
            <person name="Yeaman C."/>
            <person name="Matsuda M."/>
            <person name="Rosse C."/>
            <person name="Camonis J."/>
        </authorList>
    </citation>
    <scope>FUNCTION</scope>
    <scope>SUBCELLULAR LOCATION</scope>
</reference>
<reference key="3">
    <citation type="journal article" date="2012" name="Nat. Commun.">
        <title>Quantitative maps of protein phosphorylation sites across 14 different rat organs and tissues.</title>
        <authorList>
            <person name="Lundby A."/>
            <person name="Secher A."/>
            <person name="Lage K."/>
            <person name="Nordsborg N.B."/>
            <person name="Dmytriyev A."/>
            <person name="Lundby C."/>
            <person name="Olsen J.V."/>
        </authorList>
    </citation>
    <scope>PHOSPHORYLATION [LARGE SCALE ANALYSIS] AT SER-241; SER-539 AND SER-545</scope>
    <scope>IDENTIFICATION BY MASS SPECTROMETRY [LARGE SCALE ANALYSIS]</scope>
</reference>
<organism>
    <name type="scientific">Rattus norvegicus</name>
    <name type="common">Rat</name>
    <dbReference type="NCBI Taxonomy" id="10116"/>
    <lineage>
        <taxon>Eukaryota</taxon>
        <taxon>Metazoa</taxon>
        <taxon>Chordata</taxon>
        <taxon>Craniata</taxon>
        <taxon>Vertebrata</taxon>
        <taxon>Euteleostomi</taxon>
        <taxon>Mammalia</taxon>
        <taxon>Eutheria</taxon>
        <taxon>Euarchontoglires</taxon>
        <taxon>Glires</taxon>
        <taxon>Rodentia</taxon>
        <taxon>Myomorpha</taxon>
        <taxon>Muroidea</taxon>
        <taxon>Muridae</taxon>
        <taxon>Murinae</taxon>
        <taxon>Rattus</taxon>
    </lineage>
</organism>
<gene>
    <name evidence="7" type="primary">Sh3bp1</name>
</gene>
<protein>
    <recommendedName>
        <fullName>SH3 domain-binding protein 1</fullName>
    </recommendedName>
</protein>
<sequence length="689" mass="74852">MMKRQLHRMRQLAHTGSSGRTPETAEFLGEDLLQVEQRLEPAKRAAHNVHKRLQACLQGQSGADMDKRVKKLPLMALSTAMAESFKELDPDSSMGKALEMSCAIQNQLARILAEFEMTLERDVLQPLNRLSEEELPAILKRKKSLQKLVSDWNTLKSRLSQAAKNSGSSQSLGGGSSSHTHMATANKVETLKEDEEELKRKVEQCKDEYLADLYHFSTKEDSYANYFTHLLEIQADYHRKSLTSLDTALAELRDNHSQADSSPLTTAAPFSRVYGVSLRTHLQDLGRDIALPIEACVLLLLSEGMQEEGLFRLAAGASVLKRLKQTMASDPHSLEEFCSDPHAVAGALKSYLRELPEPLMTSDLYDDWMRAASLKEPGARLEALHDVCSRLPQENFNNLRYLMKFLALLAEEQDVNKMTPSNIAIVLGPNLLWPPEKEGDQAQLDAASVSSIQVVGVVEVLIQNADTLFPGDINFSVSGIFSGLAPQEKPNSQQVSEELAPVAVPATAATPTPTPAPTPAPASMTVKERTESELPKPASPKVSRSPTDTTALAEDMTRKTKRPAPARPTMPPPQPSSSRSSPPALSLPAGSVSPGTPQALPRRLVGTSLRAPTVPPPLPPAPPQPARRQSRRLPVSPCPASPVISNMPAQVDQGAATEDRGGPEAVGGHPPTPVLPPQPRPRGLISETD</sequence>
<name>3BP1_RAT</name>
<comment type="function">
    <text evidence="2 6">GTPase activating protein/GAP which specifically converts GTP-bound Rho-type GTPases including RAC1 and CDC42 in their inactive GDP-bound form. By specifically inactivating RAC1 at the leading edge of migrating cells, it regulates the spatiotemporal organization of cell protrusions which is important for proper cell migration (PubMed:21658605). Also negatively regulates CDC42 in the process of actin remodeling and the formation of epithelial cell junctions. Through its GAP activity toward RAC1 and/or CDC42 plays a specific role in phagocytosis of large particles. Specifically recruited by a PI3 kinase/PI3K-dependent mechanism to sites of large particles engagement, inactivates RAC1 and/or CDC42 allowing the reorganization of the underlying actin cytoskeleton required for engulfment. It also plays a role in angiogenesis and the process of repulsive guidance as part of a semaphorin-plexin signaling pathway. Following the binding of PLXND1 to extracellular SEMA3E it dissociates from PLXND1 and inactivates RAC1, inducing the intracellular reorganization of the actin cytoskeleton and the collapse of cells (By similarity).</text>
</comment>
<comment type="subunit">
    <text evidence="1 2">Interacts with RAC1. Interacts with the exocyst via EXOC4 and EXOC8; required for the localization of both SH3BP1 and the exocyst to the leading edge of migrating cells. Interacts with CD2AP and CGNL1; probably part of a complex at cell junctions. Interacts with CAPZA1; recruits CAPZA1 to forming cell junctions. May interact with AFDN. Interacts with PLXND1; they dissociate upon SEMA3E binding to PLXND1 allowing SH3BP1 to transduce downstream signal through RAC1 inactivation. Interacts with ABL1, GRB2 and SRC (via SH3 domain).</text>
</comment>
<comment type="subcellular location">
    <subcellularLocation>
        <location evidence="6">Cell projection</location>
    </subcellularLocation>
    <subcellularLocation>
        <location evidence="2">Cell junction</location>
        <location evidence="2">Tight junction</location>
    </subcellularLocation>
    <subcellularLocation>
        <location evidence="2">Cell junction</location>
        <location evidence="2">Adherens junction</location>
    </subcellularLocation>
    <subcellularLocation>
        <location evidence="2">Cell projection</location>
        <location evidence="2">Phagocytic cup</location>
    </subcellularLocation>
    <subcellularLocation>
        <location evidence="2">Nucleus</location>
    </subcellularLocation>
    <subcellularLocation>
        <location evidence="2">Cytoplasm</location>
        <location evidence="2">Cytosol</location>
    </subcellularLocation>
    <text evidence="2 6">Localizes at the leading edge of migrating cells (PubMed:21658605). Accumulation at forming phagocytic cups is PI3 kinase/bPI3K-dependent and is specific for sites of large particles engagement and their phosphatidylinositol 3,4,5-triphosphate membrane content (By similarity).</text>
</comment>
<comment type="domain">
    <text evidence="2">The BAR domain mediates interaction with the exocyst components EXOC4 and EXOC8 and is required for the function in cell migration. It also mediates the interaction with PLXND1.</text>
</comment>
<feature type="chain" id="PRO_0000441925" description="SH3 domain-binding protein 1">
    <location>
        <begin position="1"/>
        <end position="689"/>
    </location>
</feature>
<feature type="domain" description="BAR" evidence="4">
    <location>
        <begin position="17"/>
        <end position="262"/>
    </location>
</feature>
<feature type="domain" description="Rho-GAP" evidence="3">
    <location>
        <begin position="276"/>
        <end position="469"/>
    </location>
</feature>
<feature type="region of interest" description="Interaction with CGNL1" evidence="2">
    <location>
        <begin position="1"/>
        <end position="275"/>
    </location>
</feature>
<feature type="region of interest" description="Disordered" evidence="5">
    <location>
        <begin position="1"/>
        <end position="24"/>
    </location>
</feature>
<feature type="region of interest" description="Interaction with CD2AP" evidence="2">
    <location>
        <begin position="470"/>
        <end position="689"/>
    </location>
</feature>
<feature type="region of interest" description="Disordered" evidence="5">
    <location>
        <begin position="507"/>
        <end position="689"/>
    </location>
</feature>
<feature type="short sequence motif" description="SH3-binding" evidence="1">
    <location>
        <begin position="611"/>
        <end position="620"/>
    </location>
</feature>
<feature type="compositionally biased region" description="Basic residues" evidence="5">
    <location>
        <begin position="1"/>
        <end position="11"/>
    </location>
</feature>
<feature type="compositionally biased region" description="Pro residues" evidence="5">
    <location>
        <begin position="565"/>
        <end position="575"/>
    </location>
</feature>
<feature type="compositionally biased region" description="Low complexity" evidence="5">
    <location>
        <begin position="576"/>
        <end position="594"/>
    </location>
</feature>
<feature type="compositionally biased region" description="Pro residues" evidence="5">
    <location>
        <begin position="613"/>
        <end position="625"/>
    </location>
</feature>
<feature type="compositionally biased region" description="Pro residues" evidence="5">
    <location>
        <begin position="670"/>
        <end position="680"/>
    </location>
</feature>
<feature type="site" description="Arginine finger; crucial for GTP hydrolysis by stabilizing the transition state" evidence="3">
    <location>
        <position position="312"/>
    </location>
</feature>
<feature type="modified residue" description="Phosphoserine" evidence="8">
    <location>
        <position position="241"/>
    </location>
</feature>
<feature type="modified residue" description="Phosphoserine" evidence="2">
    <location>
        <position position="262"/>
    </location>
</feature>
<feature type="modified residue" description="Phosphoserine" evidence="8">
    <location>
        <position position="539"/>
    </location>
</feature>
<feature type="modified residue" description="Phosphoserine" evidence="8">
    <location>
        <position position="545"/>
    </location>
</feature>
<feature type="modified residue" description="Phosphoserine" evidence="1">
    <location>
        <position position="586"/>
    </location>
</feature>
<feature type="modified residue" description="Phosphothreonine" evidence="1">
    <location>
        <position position="596"/>
    </location>
</feature>
<feature type="modified residue" description="Phosphoserine" evidence="1">
    <location>
        <position position="641"/>
    </location>
</feature>
<keyword id="KW-0965">Cell junction</keyword>
<keyword id="KW-0966">Cell projection</keyword>
<keyword id="KW-0963">Cytoplasm</keyword>
<keyword id="KW-0343">GTPase activation</keyword>
<keyword id="KW-0539">Nucleus</keyword>
<keyword id="KW-0581">Phagocytosis</keyword>
<keyword id="KW-0597">Phosphoprotein</keyword>
<keyword id="KW-1185">Reference proteome</keyword>
<keyword id="KW-0729">SH3-binding</keyword>
<keyword id="KW-0796">Tight junction</keyword>
<evidence type="ECO:0000250" key="1">
    <source>
        <dbReference type="UniProtKB" id="P55194"/>
    </source>
</evidence>
<evidence type="ECO:0000250" key="2">
    <source>
        <dbReference type="UniProtKB" id="Q9Y3L3"/>
    </source>
</evidence>
<evidence type="ECO:0000255" key="3">
    <source>
        <dbReference type="PROSITE-ProRule" id="PRU00172"/>
    </source>
</evidence>
<evidence type="ECO:0000255" key="4">
    <source>
        <dbReference type="PROSITE-ProRule" id="PRU00361"/>
    </source>
</evidence>
<evidence type="ECO:0000256" key="5">
    <source>
        <dbReference type="SAM" id="MobiDB-lite"/>
    </source>
</evidence>
<evidence type="ECO:0000269" key="6">
    <source>
    </source>
</evidence>
<evidence type="ECO:0000312" key="7">
    <source>
        <dbReference type="RGD" id="1306275"/>
    </source>
</evidence>
<evidence type="ECO:0007744" key="8">
    <source>
    </source>
</evidence>
<proteinExistence type="evidence at protein level"/>
<dbReference type="EMBL" id="AC096473">
    <property type="status" value="NOT_ANNOTATED_CDS"/>
    <property type="molecule type" value="Genomic_DNA"/>
</dbReference>
<dbReference type="RefSeq" id="NP_001165452.1">
    <property type="nucleotide sequence ID" value="NM_001171981.1"/>
</dbReference>
<dbReference type="SMR" id="D3ZFJ3"/>
<dbReference type="FunCoup" id="D3ZFJ3">
    <property type="interactions" value="1684"/>
</dbReference>
<dbReference type="IntAct" id="D3ZFJ3">
    <property type="interactions" value="1"/>
</dbReference>
<dbReference type="STRING" id="10116.ENSRNOP00000012480"/>
<dbReference type="GlyGen" id="D3ZFJ3">
    <property type="glycosylation" value="3 sites"/>
</dbReference>
<dbReference type="iPTMnet" id="D3ZFJ3"/>
<dbReference type="PhosphoSitePlus" id="D3ZFJ3"/>
<dbReference type="PaxDb" id="10116-ENSRNOP00000012480"/>
<dbReference type="PeptideAtlas" id="D3ZFJ3"/>
<dbReference type="Ensembl" id="ENSRNOT00000012480.6">
    <property type="protein sequence ID" value="ENSRNOP00000012480.3"/>
    <property type="gene ID" value="ENSRNOG00000009360.7"/>
</dbReference>
<dbReference type="GeneID" id="300067"/>
<dbReference type="KEGG" id="rno:300067"/>
<dbReference type="AGR" id="RGD:1306275"/>
<dbReference type="CTD" id="23616"/>
<dbReference type="RGD" id="1306275">
    <property type="gene designation" value="Sh3bp1"/>
</dbReference>
<dbReference type="eggNOG" id="KOG4270">
    <property type="taxonomic scope" value="Eukaryota"/>
</dbReference>
<dbReference type="GeneTree" id="ENSGT00940000158369"/>
<dbReference type="HOGENOM" id="CLU_013806_2_1_1"/>
<dbReference type="InParanoid" id="D3ZFJ3"/>
<dbReference type="OMA" id="WDYFFEG"/>
<dbReference type="OrthoDB" id="87710at9989"/>
<dbReference type="TreeFam" id="TF316514"/>
<dbReference type="Reactome" id="R-RNO-9013149">
    <property type="pathway name" value="RAC1 GTPase cycle"/>
</dbReference>
<dbReference type="PRO" id="PR:D3ZFJ3"/>
<dbReference type="Proteomes" id="UP000002494">
    <property type="component" value="Chromosome 7"/>
</dbReference>
<dbReference type="Bgee" id="ENSRNOG00000009360">
    <property type="expression patterns" value="Expressed in spleen and 19 other cell types or tissues"/>
</dbReference>
<dbReference type="GO" id="GO:0005912">
    <property type="term" value="C:adherens junction"/>
    <property type="evidence" value="ECO:0000250"/>
    <property type="project" value="UniProtKB"/>
</dbReference>
<dbReference type="GO" id="GO:0005923">
    <property type="term" value="C:bicellular tight junction"/>
    <property type="evidence" value="ECO:0000250"/>
    <property type="project" value="UniProtKB"/>
</dbReference>
<dbReference type="GO" id="GO:0031252">
    <property type="term" value="C:cell leading edge"/>
    <property type="evidence" value="ECO:0000314"/>
    <property type="project" value="UniProtKB"/>
</dbReference>
<dbReference type="GO" id="GO:0005829">
    <property type="term" value="C:cytosol"/>
    <property type="evidence" value="ECO:0000250"/>
    <property type="project" value="UniProtKB"/>
</dbReference>
<dbReference type="GO" id="GO:0000145">
    <property type="term" value="C:exocyst"/>
    <property type="evidence" value="ECO:0000266"/>
    <property type="project" value="RGD"/>
</dbReference>
<dbReference type="GO" id="GO:0030027">
    <property type="term" value="C:lamellipodium"/>
    <property type="evidence" value="ECO:0000266"/>
    <property type="project" value="RGD"/>
</dbReference>
<dbReference type="GO" id="GO:0005634">
    <property type="term" value="C:nucleus"/>
    <property type="evidence" value="ECO:0000250"/>
    <property type="project" value="UniProtKB"/>
</dbReference>
<dbReference type="GO" id="GO:0001891">
    <property type="term" value="C:phagocytic cup"/>
    <property type="evidence" value="ECO:0000250"/>
    <property type="project" value="UniProtKB"/>
</dbReference>
<dbReference type="GO" id="GO:0005886">
    <property type="term" value="C:plasma membrane"/>
    <property type="evidence" value="ECO:0000318"/>
    <property type="project" value="GO_Central"/>
</dbReference>
<dbReference type="GO" id="GO:0005096">
    <property type="term" value="F:GTPase activator activity"/>
    <property type="evidence" value="ECO:0000315"/>
    <property type="project" value="UniProtKB"/>
</dbReference>
<dbReference type="GO" id="GO:0030215">
    <property type="term" value="F:semaphorin receptor binding"/>
    <property type="evidence" value="ECO:0000266"/>
    <property type="project" value="RGD"/>
</dbReference>
<dbReference type="GO" id="GO:0017124">
    <property type="term" value="F:SH3 domain binding"/>
    <property type="evidence" value="ECO:0000266"/>
    <property type="project" value="RGD"/>
</dbReference>
<dbReference type="GO" id="GO:0007015">
    <property type="term" value="P:actin filament organization"/>
    <property type="evidence" value="ECO:0000250"/>
    <property type="project" value="UniProtKB"/>
</dbReference>
<dbReference type="GO" id="GO:0034329">
    <property type="term" value="P:cell junction assembly"/>
    <property type="evidence" value="ECO:0000250"/>
    <property type="project" value="UniProtKB"/>
</dbReference>
<dbReference type="GO" id="GO:0016477">
    <property type="term" value="P:cell migration"/>
    <property type="evidence" value="ECO:0000315"/>
    <property type="project" value="UniProtKB"/>
</dbReference>
<dbReference type="GO" id="GO:0045198">
    <property type="term" value="P:establishment of epithelial cell apical/basal polarity"/>
    <property type="evidence" value="ECO:0000250"/>
    <property type="project" value="UniProtKB"/>
</dbReference>
<dbReference type="GO" id="GO:0046847">
    <property type="term" value="P:filopodium assembly"/>
    <property type="evidence" value="ECO:0000315"/>
    <property type="project" value="UniProtKB"/>
</dbReference>
<dbReference type="GO" id="GO:0051058">
    <property type="term" value="P:negative regulation of small GTPase mediated signal transduction"/>
    <property type="evidence" value="ECO:0000250"/>
    <property type="project" value="UniProtKB"/>
</dbReference>
<dbReference type="GO" id="GO:0006911">
    <property type="term" value="P:phagocytosis, engulfment"/>
    <property type="evidence" value="ECO:0000250"/>
    <property type="project" value="UniProtKB"/>
</dbReference>
<dbReference type="GO" id="GO:0043547">
    <property type="term" value="P:positive regulation of GTPase activity"/>
    <property type="evidence" value="ECO:0000315"/>
    <property type="project" value="UniProtKB"/>
</dbReference>
<dbReference type="GO" id="GO:0032956">
    <property type="term" value="P:regulation of actin cytoskeleton organization"/>
    <property type="evidence" value="ECO:0000266"/>
    <property type="project" value="RGD"/>
</dbReference>
<dbReference type="GO" id="GO:0030834">
    <property type="term" value="P:regulation of actin filament depolymerization"/>
    <property type="evidence" value="ECO:0000266"/>
    <property type="project" value="RGD"/>
</dbReference>
<dbReference type="GO" id="GO:0043535">
    <property type="term" value="P:regulation of blood vessel endothelial cell migration"/>
    <property type="evidence" value="ECO:0000266"/>
    <property type="project" value="RGD"/>
</dbReference>
<dbReference type="GO" id="GO:0035020">
    <property type="term" value="P:regulation of Rac protein signal transduction"/>
    <property type="evidence" value="ECO:0000318"/>
    <property type="project" value="GO_Central"/>
</dbReference>
<dbReference type="GO" id="GO:0097178">
    <property type="term" value="P:ruffle assembly"/>
    <property type="evidence" value="ECO:0000266"/>
    <property type="project" value="RGD"/>
</dbReference>
<dbReference type="GO" id="GO:0071526">
    <property type="term" value="P:semaphorin-plexin signaling pathway"/>
    <property type="evidence" value="ECO:0000250"/>
    <property type="project" value="UniProtKB"/>
</dbReference>
<dbReference type="CDD" id="cd07620">
    <property type="entry name" value="BAR_SH3BP1"/>
    <property type="match status" value="1"/>
</dbReference>
<dbReference type="FunFam" id="1.10.555.10:FF:000001">
    <property type="entry name" value="Rho GTPase activating protein 44"/>
    <property type="match status" value="1"/>
</dbReference>
<dbReference type="FunFam" id="1.20.1270.60:FF:000053">
    <property type="entry name" value="SH3 domain-binding protein 1"/>
    <property type="match status" value="1"/>
</dbReference>
<dbReference type="Gene3D" id="1.20.1270.60">
    <property type="entry name" value="Arfaptin homology (AH) domain/BAR domain"/>
    <property type="match status" value="1"/>
</dbReference>
<dbReference type="Gene3D" id="1.10.555.10">
    <property type="entry name" value="Rho GTPase activation protein"/>
    <property type="match status" value="1"/>
</dbReference>
<dbReference type="InterPro" id="IPR027267">
    <property type="entry name" value="AH/BAR_dom_sf"/>
</dbReference>
<dbReference type="InterPro" id="IPR004148">
    <property type="entry name" value="BAR_dom"/>
</dbReference>
<dbReference type="InterPro" id="IPR047165">
    <property type="entry name" value="RHG17/44/SH3BP1-like"/>
</dbReference>
<dbReference type="InterPro" id="IPR008936">
    <property type="entry name" value="Rho_GTPase_activation_prot"/>
</dbReference>
<dbReference type="InterPro" id="IPR000198">
    <property type="entry name" value="RhoGAP_dom"/>
</dbReference>
<dbReference type="PANTHER" id="PTHR14130">
    <property type="entry name" value="3BP-1 RELATED RHOGAP"/>
    <property type="match status" value="1"/>
</dbReference>
<dbReference type="PANTHER" id="PTHR14130:SF12">
    <property type="entry name" value="BARGIN-RELATED"/>
    <property type="match status" value="1"/>
</dbReference>
<dbReference type="Pfam" id="PF03114">
    <property type="entry name" value="BAR"/>
    <property type="match status" value="1"/>
</dbReference>
<dbReference type="Pfam" id="PF00620">
    <property type="entry name" value="RhoGAP"/>
    <property type="match status" value="1"/>
</dbReference>
<dbReference type="SMART" id="SM00721">
    <property type="entry name" value="BAR"/>
    <property type="match status" value="1"/>
</dbReference>
<dbReference type="SMART" id="SM00324">
    <property type="entry name" value="RhoGAP"/>
    <property type="match status" value="1"/>
</dbReference>
<dbReference type="SUPFAM" id="SSF103657">
    <property type="entry name" value="BAR/IMD domain-like"/>
    <property type="match status" value="1"/>
</dbReference>
<dbReference type="SUPFAM" id="SSF48350">
    <property type="entry name" value="GTPase activation domain, GAP"/>
    <property type="match status" value="1"/>
</dbReference>
<dbReference type="PROSITE" id="PS51021">
    <property type="entry name" value="BAR"/>
    <property type="match status" value="1"/>
</dbReference>
<dbReference type="PROSITE" id="PS50238">
    <property type="entry name" value="RHOGAP"/>
    <property type="match status" value="1"/>
</dbReference>
<accession>D3ZFJ3</accession>